<protein>
    <recommendedName>
        <fullName evidence="1">Probable lipid kinase YegS-like</fullName>
        <ecNumber evidence="1">2.7.1.-</ecNumber>
    </recommendedName>
</protein>
<comment type="function">
    <text evidence="1">Probably phosphorylates lipids; the in vivo substrate is unknown.</text>
</comment>
<comment type="cofactor">
    <cofactor evidence="1">
        <name>Mg(2+)</name>
        <dbReference type="ChEBI" id="CHEBI:18420"/>
    </cofactor>
    <cofactor evidence="1">
        <name>Ca(2+)</name>
        <dbReference type="ChEBI" id="CHEBI:29108"/>
    </cofactor>
    <text evidence="1">Binds 1 Mg(2+) ion per subunit. Ca(2+) may be able to substitute.</text>
</comment>
<comment type="subcellular location">
    <subcellularLocation>
        <location evidence="1">Cytoplasm</location>
    </subcellularLocation>
</comment>
<comment type="similarity">
    <text evidence="1">Belongs to the diacylglycerol/lipid kinase family. YegS lipid kinase subfamily.</text>
</comment>
<comment type="sequence caution" evidence="2">
    <conflict type="erroneous initiation">
        <sequence resource="EMBL-CDS" id="CAL15936"/>
    </conflict>
</comment>
<evidence type="ECO:0000255" key="1">
    <source>
        <dbReference type="HAMAP-Rule" id="MF_01377"/>
    </source>
</evidence>
<evidence type="ECO:0000305" key="2"/>
<feature type="chain" id="PRO_0000292139" description="Probable lipid kinase YegS-like">
    <location>
        <begin position="1"/>
        <end position="300"/>
    </location>
</feature>
<feature type="domain" description="DAGKc" evidence="1">
    <location>
        <begin position="1"/>
        <end position="129"/>
    </location>
</feature>
<feature type="active site" description="Proton acceptor" evidence="1">
    <location>
        <position position="272"/>
    </location>
</feature>
<feature type="binding site" evidence="1">
    <location>
        <position position="38"/>
    </location>
    <ligand>
        <name>ATP</name>
        <dbReference type="ChEBI" id="CHEBI:30616"/>
    </ligand>
</feature>
<feature type="binding site" evidence="1">
    <location>
        <begin position="64"/>
        <end position="70"/>
    </location>
    <ligand>
        <name>ATP</name>
        <dbReference type="ChEBI" id="CHEBI:30616"/>
    </ligand>
</feature>
<feature type="binding site" evidence="1">
    <location>
        <position position="92"/>
    </location>
    <ligand>
        <name>ATP</name>
        <dbReference type="ChEBI" id="CHEBI:30616"/>
    </ligand>
</feature>
<feature type="binding site" evidence="1">
    <location>
        <position position="210"/>
    </location>
    <ligand>
        <name>Mg(2+)</name>
        <dbReference type="ChEBI" id="CHEBI:18420"/>
    </ligand>
</feature>
<feature type="binding site" evidence="1">
    <location>
        <position position="213"/>
    </location>
    <ligand>
        <name>Mg(2+)</name>
        <dbReference type="ChEBI" id="CHEBI:18420"/>
    </ligand>
</feature>
<feature type="binding site" evidence="1">
    <location>
        <position position="215"/>
    </location>
    <ligand>
        <name>Mg(2+)</name>
        <dbReference type="ChEBI" id="CHEBI:18420"/>
    </ligand>
</feature>
<keyword id="KW-0067">ATP-binding</keyword>
<keyword id="KW-0963">Cytoplasm</keyword>
<keyword id="KW-0418">Kinase</keyword>
<keyword id="KW-0444">Lipid biosynthesis</keyword>
<keyword id="KW-0443">Lipid metabolism</keyword>
<keyword id="KW-0460">Magnesium</keyword>
<keyword id="KW-0479">Metal-binding</keyword>
<keyword id="KW-0547">Nucleotide-binding</keyword>
<keyword id="KW-0594">Phospholipid biosynthesis</keyword>
<keyword id="KW-1208">Phospholipid metabolism</keyword>
<keyword id="KW-1185">Reference proteome</keyword>
<keyword id="KW-0808">Transferase</keyword>
<name>YEGS_ALCBS</name>
<dbReference type="EC" id="2.7.1.-" evidence="1"/>
<dbReference type="EMBL" id="AM286690">
    <property type="protein sequence ID" value="CAL15936.1"/>
    <property type="status" value="ALT_INIT"/>
    <property type="molecule type" value="Genomic_DNA"/>
</dbReference>
<dbReference type="SMR" id="Q0VSB2"/>
<dbReference type="STRING" id="393595.ABO_0488"/>
<dbReference type="KEGG" id="abo:ABO_0488"/>
<dbReference type="eggNOG" id="COG1597">
    <property type="taxonomic scope" value="Bacteria"/>
</dbReference>
<dbReference type="HOGENOM" id="CLU_045532_1_1_6"/>
<dbReference type="Proteomes" id="UP000008871">
    <property type="component" value="Chromosome"/>
</dbReference>
<dbReference type="GO" id="GO:0005737">
    <property type="term" value="C:cytoplasm"/>
    <property type="evidence" value="ECO:0007669"/>
    <property type="project" value="UniProtKB-SubCell"/>
</dbReference>
<dbReference type="GO" id="GO:0005886">
    <property type="term" value="C:plasma membrane"/>
    <property type="evidence" value="ECO:0007669"/>
    <property type="project" value="TreeGrafter"/>
</dbReference>
<dbReference type="GO" id="GO:0005524">
    <property type="term" value="F:ATP binding"/>
    <property type="evidence" value="ECO:0007669"/>
    <property type="project" value="UniProtKB-UniRule"/>
</dbReference>
<dbReference type="GO" id="GO:0001727">
    <property type="term" value="F:lipid kinase activity"/>
    <property type="evidence" value="ECO:0007669"/>
    <property type="project" value="UniProtKB-UniRule"/>
</dbReference>
<dbReference type="GO" id="GO:0000287">
    <property type="term" value="F:magnesium ion binding"/>
    <property type="evidence" value="ECO:0007669"/>
    <property type="project" value="UniProtKB-UniRule"/>
</dbReference>
<dbReference type="GO" id="GO:0008654">
    <property type="term" value="P:phospholipid biosynthetic process"/>
    <property type="evidence" value="ECO:0007669"/>
    <property type="project" value="UniProtKB-UniRule"/>
</dbReference>
<dbReference type="Gene3D" id="2.60.200.40">
    <property type="match status" value="1"/>
</dbReference>
<dbReference type="Gene3D" id="3.40.50.10330">
    <property type="entry name" value="Probable inorganic polyphosphate/atp-NAD kinase, domain 1"/>
    <property type="match status" value="1"/>
</dbReference>
<dbReference type="HAMAP" id="MF_01377">
    <property type="entry name" value="YegS"/>
    <property type="match status" value="1"/>
</dbReference>
<dbReference type="InterPro" id="IPR017438">
    <property type="entry name" value="ATP-NAD_kinase_N"/>
</dbReference>
<dbReference type="InterPro" id="IPR005218">
    <property type="entry name" value="Diacylglycerol/lipid_kinase"/>
</dbReference>
<dbReference type="InterPro" id="IPR001206">
    <property type="entry name" value="Diacylglycerol_kinase_cat_dom"/>
</dbReference>
<dbReference type="InterPro" id="IPR022433">
    <property type="entry name" value="Lip_kinase_YegS"/>
</dbReference>
<dbReference type="InterPro" id="IPR050187">
    <property type="entry name" value="Lipid_Phosphate_FormReg"/>
</dbReference>
<dbReference type="InterPro" id="IPR016064">
    <property type="entry name" value="NAD/diacylglycerol_kinase_sf"/>
</dbReference>
<dbReference type="InterPro" id="IPR045540">
    <property type="entry name" value="YegS/DAGK_C"/>
</dbReference>
<dbReference type="NCBIfam" id="TIGR03702">
    <property type="entry name" value="lip_kinase_YegS"/>
    <property type="match status" value="1"/>
</dbReference>
<dbReference type="NCBIfam" id="NF009602">
    <property type="entry name" value="PRK13054.1"/>
    <property type="match status" value="1"/>
</dbReference>
<dbReference type="NCBIfam" id="TIGR00147">
    <property type="entry name" value="YegS/Rv2252/BmrU family lipid kinase"/>
    <property type="match status" value="1"/>
</dbReference>
<dbReference type="PANTHER" id="PTHR12358:SF106">
    <property type="entry name" value="LIPID KINASE YEGS"/>
    <property type="match status" value="1"/>
</dbReference>
<dbReference type="PANTHER" id="PTHR12358">
    <property type="entry name" value="SPHINGOSINE KINASE"/>
    <property type="match status" value="1"/>
</dbReference>
<dbReference type="Pfam" id="PF00781">
    <property type="entry name" value="DAGK_cat"/>
    <property type="match status" value="1"/>
</dbReference>
<dbReference type="Pfam" id="PF19279">
    <property type="entry name" value="YegS_C"/>
    <property type="match status" value="1"/>
</dbReference>
<dbReference type="SMART" id="SM00046">
    <property type="entry name" value="DAGKc"/>
    <property type="match status" value="1"/>
</dbReference>
<dbReference type="SUPFAM" id="SSF111331">
    <property type="entry name" value="NAD kinase/diacylglycerol kinase-like"/>
    <property type="match status" value="1"/>
</dbReference>
<dbReference type="PROSITE" id="PS50146">
    <property type="entry name" value="DAGK"/>
    <property type="match status" value="1"/>
</dbReference>
<organism>
    <name type="scientific">Alcanivorax borkumensis (strain ATCC 700651 / DSM 11573 / NCIMB 13689 / SK2)</name>
    <dbReference type="NCBI Taxonomy" id="393595"/>
    <lineage>
        <taxon>Bacteria</taxon>
        <taxon>Pseudomonadati</taxon>
        <taxon>Pseudomonadota</taxon>
        <taxon>Gammaproteobacteria</taxon>
        <taxon>Oceanospirillales</taxon>
        <taxon>Alcanivoracaceae</taxon>
        <taxon>Alcanivorax</taxon>
    </lineage>
</organism>
<accession>Q0VSB2</accession>
<reference key="1">
    <citation type="journal article" date="2006" name="Nat. Biotechnol.">
        <title>Genome sequence of the ubiquitous hydrocarbon-degrading marine bacterium Alcanivorax borkumensis.</title>
        <authorList>
            <person name="Schneiker S."/>
            <person name="Martins dos Santos V.A.P."/>
            <person name="Bartels D."/>
            <person name="Bekel T."/>
            <person name="Brecht M."/>
            <person name="Buhrmester J."/>
            <person name="Chernikova T.N."/>
            <person name="Denaro R."/>
            <person name="Ferrer M."/>
            <person name="Gertler C."/>
            <person name="Goesmann A."/>
            <person name="Golyshina O.V."/>
            <person name="Kaminski F."/>
            <person name="Khachane A.N."/>
            <person name="Lang S."/>
            <person name="Linke B."/>
            <person name="McHardy A.C."/>
            <person name="Meyer F."/>
            <person name="Nechitaylo T."/>
            <person name="Puehler A."/>
            <person name="Regenhardt D."/>
            <person name="Rupp O."/>
            <person name="Sabirova J.S."/>
            <person name="Selbitschka W."/>
            <person name="Yakimov M.M."/>
            <person name="Timmis K.N."/>
            <person name="Vorhoelter F.-J."/>
            <person name="Weidner S."/>
            <person name="Kaiser O."/>
            <person name="Golyshin P.N."/>
        </authorList>
    </citation>
    <scope>NUCLEOTIDE SEQUENCE [LARGE SCALE GENOMIC DNA]</scope>
    <source>
        <strain>ATCC 700651 / DSM 11573 / NCIMB 13689 / SK2</strain>
    </source>
</reference>
<gene>
    <name type="ordered locus">ABO_0488</name>
</gene>
<sequence length="300" mass="32576">MSKKALLILHGKQADNQSVRNAVIDWRNQGHELAVRVTWEGGDAERYVREALDNGFKTIIAGGGDGSVRDITQALMENGNSELELAIIPLGTANDFATAAEVSEEPADALSLLNRPAQPCDVIRVNNHYFLNMATGGFGTEVTTQTSEELKKMLGGAAYLLTGLTRFSEIESAKGHFKGEDFEWEGDFLALGLGNGRQAGGGQRLCPDALVNDGLFDVAILPADMDLLAGVKELFDSEARQDPDQEGLFVRTRLSEMKIETPTPMNLNLDGEPIQNTTFQIQAIRNALRLYLPEGCPLLG</sequence>
<proteinExistence type="inferred from homology"/>